<comment type="function">
    <text evidence="1">Binds to sialic acid-containing receptors on the cell surface, bringing about the attachment of the virus particle to the cell. This attachment induces virion internalization either through clathrin-dependent endocytosis or through clathrin- and caveolin-independent pathway. Plays a major role in the determination of host range restriction and virulence. Class I viral fusion protein. Responsible for penetration of the virus into the cell cytoplasm by mediating the fusion of the membrane of the endocytosed virus particle with the endosomal membrane. Low pH in endosomes induces an irreversible conformational change in HA2, releasing the fusion hydrophobic peptide. Several trimers are required to form a competent fusion pore.</text>
</comment>
<comment type="subunit">
    <text evidence="1">Homotrimer of disulfide-linked HA1-HA2.</text>
</comment>
<comment type="subcellular location">
    <subcellularLocation>
        <location evidence="1">Virion membrane</location>
        <topology evidence="1">Single-pass type I membrane protein</topology>
    </subcellularLocation>
    <subcellularLocation>
        <location evidence="1">Host apical cell membrane</location>
        <topology evidence="1">Single-pass type I membrane protein</topology>
    </subcellularLocation>
    <text evidence="1">Targeted to the apical plasma membrane in epithelial polarized cells through a signal present in the transmembrane domain. Associated with glycosphingolipid- and cholesterol-enriched detergent-resistant lipid rafts.</text>
</comment>
<comment type="PTM">
    <text evidence="1">Palmitoylated.</text>
</comment>
<comment type="PTM">
    <text evidence="1">In natural infection, inactive HA is matured into HA1 and HA2 outside the cell by one or more trypsin-like, arginine-specific endoprotease secreted by the bronchial epithelial cells. One identified protease that may be involved in this process is secreted in lungs by club cells.</text>
</comment>
<comment type="miscellaneous">
    <text>Major glycoprotein, comprises over 80% of the envelope proteins present in virus particle.</text>
</comment>
<comment type="miscellaneous">
    <text>The extent of infection into host organism is determined by HA. Influenza viruses bud from the apical surface of polarized epithelial cells (e.g. bronchial epithelial cells) into lumen of lungs and are therefore usually pneumotropic. The reason is that HA is cleaved by tryptase clara which is restricted to lungs. However, HAs of H5 and H7 pantropic avian viruses subtypes can be cleaved by furin and subtilisin-type enzymes, allowing the virus to grow in other organs than lungs.</text>
</comment>
<comment type="miscellaneous">
    <text>The influenza A genome consist of 8 RNA segments. Genetic variation of hemagglutinin and/or neuraminidase genes results in the emergence of new influenza strains. The mechanism of variation can be the result of point mutations or the result of genetic reassortment between segments of two different strains.</text>
</comment>
<comment type="similarity">
    <text evidence="1">Belongs to the influenza viruses hemagglutinin family.</text>
</comment>
<dbReference type="EMBL" id="M16742">
    <property type="protein sequence ID" value="AAA43148.1"/>
    <property type="molecule type" value="Genomic_RNA"/>
</dbReference>
<dbReference type="PIR" id="F27813">
    <property type="entry name" value="HMIV98"/>
</dbReference>
<dbReference type="SMR" id="P12587"/>
<dbReference type="GlyCosmos" id="P12587">
    <property type="glycosylation" value="5 sites, No reported glycans"/>
</dbReference>
<dbReference type="GO" id="GO:0020002">
    <property type="term" value="C:host cell plasma membrane"/>
    <property type="evidence" value="ECO:0007669"/>
    <property type="project" value="UniProtKB-SubCell"/>
</dbReference>
<dbReference type="GO" id="GO:0016020">
    <property type="term" value="C:membrane"/>
    <property type="evidence" value="ECO:0007669"/>
    <property type="project" value="UniProtKB-KW"/>
</dbReference>
<dbReference type="GO" id="GO:0019031">
    <property type="term" value="C:viral envelope"/>
    <property type="evidence" value="ECO:0007669"/>
    <property type="project" value="UniProtKB-KW"/>
</dbReference>
<dbReference type="GO" id="GO:0055036">
    <property type="term" value="C:virion membrane"/>
    <property type="evidence" value="ECO:0007669"/>
    <property type="project" value="UniProtKB-SubCell"/>
</dbReference>
<dbReference type="GO" id="GO:0046789">
    <property type="term" value="F:host cell surface receptor binding"/>
    <property type="evidence" value="ECO:0007669"/>
    <property type="project" value="InterPro"/>
</dbReference>
<dbReference type="GO" id="GO:0075512">
    <property type="term" value="P:clathrin-dependent endocytosis of virus by host cell"/>
    <property type="evidence" value="ECO:0007669"/>
    <property type="project" value="UniProtKB-KW"/>
</dbReference>
<dbReference type="GO" id="GO:0039654">
    <property type="term" value="P:fusion of virus membrane with host endosome membrane"/>
    <property type="evidence" value="ECO:0007669"/>
    <property type="project" value="UniProtKB-KW"/>
</dbReference>
<dbReference type="GO" id="GO:0019064">
    <property type="term" value="P:fusion of virus membrane with host plasma membrane"/>
    <property type="evidence" value="ECO:0007669"/>
    <property type="project" value="InterPro"/>
</dbReference>
<dbReference type="GO" id="GO:0019062">
    <property type="term" value="P:virion attachment to host cell"/>
    <property type="evidence" value="ECO:0007669"/>
    <property type="project" value="UniProtKB-KW"/>
</dbReference>
<dbReference type="FunFam" id="3.90.20.10:FF:000001">
    <property type="entry name" value="Hemagglutinin"/>
    <property type="match status" value="1"/>
</dbReference>
<dbReference type="FunFam" id="3.90.209.20:FF:000001">
    <property type="entry name" value="Hemagglutinin"/>
    <property type="match status" value="1"/>
</dbReference>
<dbReference type="Gene3D" id="3.90.20.10">
    <property type="match status" value="1"/>
</dbReference>
<dbReference type="Gene3D" id="3.90.209.20">
    <property type="match status" value="1"/>
</dbReference>
<dbReference type="HAMAP" id="MF_04072">
    <property type="entry name" value="INFV_HEMA"/>
    <property type="match status" value="1"/>
</dbReference>
<dbReference type="InterPro" id="IPR008980">
    <property type="entry name" value="Capsid_hemagglutn"/>
</dbReference>
<dbReference type="InterPro" id="IPR013828">
    <property type="entry name" value="Hemagglutn_HA1_a/b_dom_sf"/>
</dbReference>
<dbReference type="InterPro" id="IPR000149">
    <property type="entry name" value="Hemagglutn_influenz_A"/>
</dbReference>
<dbReference type="InterPro" id="IPR001364">
    <property type="entry name" value="Hemagglutn_influenz_A/B"/>
</dbReference>
<dbReference type="Pfam" id="PF00509">
    <property type="entry name" value="Hemagglutinin"/>
    <property type="match status" value="1"/>
</dbReference>
<dbReference type="PRINTS" id="PR00330">
    <property type="entry name" value="HEMAGGLUTN1"/>
</dbReference>
<dbReference type="PRINTS" id="PR00329">
    <property type="entry name" value="HEMAGGLUTN12"/>
</dbReference>
<dbReference type="SUPFAM" id="SSF58064">
    <property type="entry name" value="Influenza hemagglutinin (stalk)"/>
    <property type="match status" value="1"/>
</dbReference>
<dbReference type="SUPFAM" id="SSF49818">
    <property type="entry name" value="Viral protein domain"/>
    <property type="match status" value="1"/>
</dbReference>
<evidence type="ECO:0000255" key="1">
    <source>
        <dbReference type="HAMAP-Rule" id="MF_04072"/>
    </source>
</evidence>
<organism>
    <name type="scientific">Influenza A virus (strain A/Duck/Hokkaido/9/1985 H3N8)</name>
    <dbReference type="NCBI Taxonomy" id="11362"/>
    <lineage>
        <taxon>Viruses</taxon>
        <taxon>Riboviria</taxon>
        <taxon>Orthornavirae</taxon>
        <taxon>Negarnaviricota</taxon>
        <taxon>Polyploviricotina</taxon>
        <taxon>Insthoviricetes</taxon>
        <taxon>Articulavirales</taxon>
        <taxon>Orthomyxoviridae</taxon>
        <taxon>Alphainfluenzavirus</taxon>
        <taxon>Alphainfluenzavirus influenzae</taxon>
        <taxon>Influenza A virus</taxon>
    </lineage>
</organism>
<name>HEMA_I85A1</name>
<proteinExistence type="inferred from homology"/>
<accession>P12587</accession>
<accession>Q84017</accession>
<keyword id="KW-1167">Clathrin- and caveolin-independent endocytosis of virus by host</keyword>
<keyword id="KW-1165">Clathrin-mediated endocytosis of virus by host</keyword>
<keyword id="KW-1015">Disulfide bond</keyword>
<keyword id="KW-1170">Fusion of virus membrane with host endosomal membrane</keyword>
<keyword id="KW-1168">Fusion of virus membrane with host membrane</keyword>
<keyword id="KW-0325">Glycoprotein</keyword>
<keyword id="KW-0348">Hemagglutinin</keyword>
<keyword id="KW-1032">Host cell membrane</keyword>
<keyword id="KW-1043">Host membrane</keyword>
<keyword id="KW-0945">Host-virus interaction</keyword>
<keyword id="KW-0449">Lipoprotein</keyword>
<keyword id="KW-0472">Membrane</keyword>
<keyword id="KW-0564">Palmitate</keyword>
<keyword id="KW-0812">Transmembrane</keyword>
<keyword id="KW-1133">Transmembrane helix</keyword>
<keyword id="KW-1161">Viral attachment to host cell</keyword>
<keyword id="KW-0261">Viral envelope protein</keyword>
<keyword id="KW-1162">Viral penetration into host cytoplasm</keyword>
<keyword id="KW-0946">Virion</keyword>
<keyword id="KW-1164">Virus endocytosis by host</keyword>
<keyword id="KW-1160">Virus entry into host cell</keyword>
<sequence>QDLPGNDYSTATLCLGHHAVPNGTLVKTITDDQIEVTNATELVQSSSTGKICNNPHRILDGRDCTLIDALLGDPHCDVFQDETWDLFVERSNAFSNCYPYDVPDYASLRSLVASSGTLEFITEGFTWTGVTQNGGSNACKRGPNSGFFSRLNWLTKSGSTYPVLNVTMPNNDNFDKLYIWGVHHPSTNQEQTNLYVQASGGVTVSTRRSQQTIIPNIGSRPWVRGQSGRISIYWTVVKPGDVLVINSNGNLIAPRGYFKMRTGKSSIMRSDAPIDTCISECITPNGSIPNDKPFQNVNKITYGACPKYVKQNTLKLATGMRNVPEKQTRGLFGAIAGFIENGWEGMIDGWYGFRHQNSEGTGQAADLKSTQAAIDQINGKLNRVIEKTNEKFHQIEKEFSEVEGRIQDLEKYVEDTKIDLWSYNADVLVALENQHTIDLTDSEMNKLFERTRRQLRENAEDMGNGCFKIYHKCDNVCIESIRNGTYDHDVYRDEALNNRFQIKGVELKSGYKDWILWISFAISCFLLCVVLLGFIMWACQRGNIRCNICI</sequence>
<organismHost>
    <name type="scientific">Aves</name>
    <dbReference type="NCBI Taxonomy" id="8782"/>
</organismHost>
<organismHost>
    <name type="scientific">Equus caballus</name>
    <name type="common">Horse</name>
    <dbReference type="NCBI Taxonomy" id="9796"/>
</organismHost>
<feature type="chain" id="PRO_0000440850" description="Hemagglutinin HA1 chain" evidence="1">
    <location>
        <begin position="1"/>
        <end position="329"/>
    </location>
</feature>
<feature type="chain" id="PRO_0000038927" description="Hemagglutinin HA2 chain" evidence="1">
    <location>
        <begin position="330"/>
        <end position="550"/>
    </location>
</feature>
<feature type="topological domain" description="Extracellular" evidence="1">
    <location>
        <begin position="1"/>
        <end position="514"/>
    </location>
</feature>
<feature type="transmembrane region" description="Helical" evidence="1">
    <location>
        <begin position="515"/>
        <end position="535"/>
    </location>
</feature>
<feature type="topological domain" description="Cytoplasmic" evidence="1">
    <location>
        <begin position="536"/>
        <end position="550"/>
    </location>
</feature>
<feature type="site" description="Cleavage; by host" evidence="1">
    <location>
        <begin position="329"/>
        <end position="330"/>
    </location>
</feature>
<feature type="lipid moiety-binding region" description="S-palmitoyl cysteine; by host" evidence="1">
    <location>
        <position position="539"/>
    </location>
</feature>
<feature type="lipid moiety-binding region" description="S-palmitoyl cysteine; by host" evidence="1">
    <location>
        <position position="546"/>
    </location>
</feature>
<feature type="lipid moiety-binding region" description="S-palmitoyl cysteine; by host" evidence="1">
    <location>
        <position position="549"/>
    </location>
</feature>
<feature type="glycosylation site" description="N-linked (GlcNAc...) asparagine; by host" evidence="1">
    <location>
        <position position="22"/>
    </location>
</feature>
<feature type="glycosylation site" description="N-linked (GlcNAc...) asparagine; by host" evidence="1">
    <location>
        <position position="38"/>
    </location>
</feature>
<feature type="glycosylation site" description="N-linked (GlcNAc...) asparagine; by host" evidence="1">
    <location>
        <position position="165"/>
    </location>
</feature>
<feature type="glycosylation site" description="N-linked (GlcNAc...) asparagine; by host" evidence="1">
    <location>
        <position position="285"/>
    </location>
</feature>
<feature type="glycosylation site" description="N-linked (GlcNAc...) asparagine; by host" evidence="1">
    <location>
        <position position="483"/>
    </location>
</feature>
<feature type="disulfide bond" description="Interchain (between HA1 and HA2 chains)" evidence="1">
    <location>
        <begin position="14"/>
        <end position="466"/>
    </location>
</feature>
<feature type="disulfide bond" evidence="1">
    <location>
        <begin position="52"/>
        <end position="277"/>
    </location>
</feature>
<feature type="disulfide bond" evidence="1">
    <location>
        <begin position="64"/>
        <end position="76"/>
    </location>
</feature>
<feature type="disulfide bond" evidence="1">
    <location>
        <begin position="97"/>
        <end position="139"/>
    </location>
</feature>
<feature type="disulfide bond" evidence="1">
    <location>
        <begin position="281"/>
        <end position="305"/>
    </location>
</feature>
<feature type="disulfide bond" evidence="1">
    <location>
        <begin position="473"/>
        <end position="477"/>
    </location>
</feature>
<feature type="non-terminal residue">
    <location>
        <position position="1"/>
    </location>
</feature>
<reference key="1">
    <citation type="journal article" date="1987" name="Virology">
        <title>Antigenic and genetic conservation of H3 influenza virus in wild ducks.</title>
        <authorList>
            <person name="Kida H."/>
            <person name="Kawaoka Y."/>
            <person name="Naeve C.W."/>
            <person name="Webster R.G."/>
        </authorList>
    </citation>
    <scope>NUCLEOTIDE SEQUENCE [GENOMIC RNA]</scope>
</reference>
<protein>
    <recommendedName>
        <fullName evidence="1">Hemagglutinin</fullName>
    </recommendedName>
    <component>
        <recommendedName>
            <fullName evidence="1">Hemagglutinin HA1 chain</fullName>
        </recommendedName>
    </component>
    <component>
        <recommendedName>
            <fullName evidence="1">Hemagglutinin HA2 chain</fullName>
        </recommendedName>
    </component>
</protein>
<gene>
    <name evidence="1" type="primary">HA</name>
</gene>